<accession>A7I417</accession>
<protein>
    <recommendedName>
        <fullName evidence="1">Ribosomal RNA small subunit methyltransferase A</fullName>
        <ecNumber evidence="1">2.1.1.182</ecNumber>
    </recommendedName>
    <alternativeName>
        <fullName evidence="1">16S rRNA (adenine(1518)-N(6)/adenine(1519)-N(6))-dimethyltransferase</fullName>
    </alternativeName>
    <alternativeName>
        <fullName evidence="1">16S rRNA dimethyladenosine transferase</fullName>
    </alternativeName>
    <alternativeName>
        <fullName evidence="1">16S rRNA dimethylase</fullName>
    </alternativeName>
    <alternativeName>
        <fullName evidence="1">S-adenosylmethionine-6-N', N'-adenosyl(rRNA) dimethyltransferase</fullName>
    </alternativeName>
</protein>
<keyword id="KW-0963">Cytoplasm</keyword>
<keyword id="KW-0489">Methyltransferase</keyword>
<keyword id="KW-1185">Reference proteome</keyword>
<keyword id="KW-0694">RNA-binding</keyword>
<keyword id="KW-0698">rRNA processing</keyword>
<keyword id="KW-0949">S-adenosyl-L-methionine</keyword>
<keyword id="KW-0808">Transferase</keyword>
<comment type="function">
    <text evidence="1">Specifically dimethylates two adjacent adenosines (A1518 and A1519) in the loop of a conserved hairpin near the 3'-end of 16S rRNA in the 30S particle. May play a critical role in biogenesis of 30S subunits.</text>
</comment>
<comment type="catalytic activity">
    <reaction evidence="1">
        <text>adenosine(1518)/adenosine(1519) in 16S rRNA + 4 S-adenosyl-L-methionine = N(6)-dimethyladenosine(1518)/N(6)-dimethyladenosine(1519) in 16S rRNA + 4 S-adenosyl-L-homocysteine + 4 H(+)</text>
        <dbReference type="Rhea" id="RHEA:19609"/>
        <dbReference type="Rhea" id="RHEA-COMP:10232"/>
        <dbReference type="Rhea" id="RHEA-COMP:10233"/>
        <dbReference type="ChEBI" id="CHEBI:15378"/>
        <dbReference type="ChEBI" id="CHEBI:57856"/>
        <dbReference type="ChEBI" id="CHEBI:59789"/>
        <dbReference type="ChEBI" id="CHEBI:74411"/>
        <dbReference type="ChEBI" id="CHEBI:74493"/>
        <dbReference type="EC" id="2.1.1.182"/>
    </reaction>
</comment>
<comment type="subcellular location">
    <subcellularLocation>
        <location evidence="1">Cytoplasm</location>
    </subcellularLocation>
</comment>
<comment type="similarity">
    <text evidence="1">Belongs to the class I-like SAM-binding methyltransferase superfamily. rRNA adenine N(6)-methyltransferase family. RsmA subfamily.</text>
</comment>
<feature type="chain" id="PRO_1000072649" description="Ribosomal RNA small subunit methyltransferase A">
    <location>
        <begin position="1"/>
        <end position="269"/>
    </location>
</feature>
<feature type="binding site" evidence="1">
    <location>
        <position position="11"/>
    </location>
    <ligand>
        <name>S-adenosyl-L-methionine</name>
        <dbReference type="ChEBI" id="CHEBI:59789"/>
    </ligand>
</feature>
<feature type="binding site" evidence="1">
    <location>
        <position position="13"/>
    </location>
    <ligand>
        <name>S-adenosyl-L-methionine</name>
        <dbReference type="ChEBI" id="CHEBI:59789"/>
    </ligand>
</feature>
<feature type="binding site" evidence="1">
    <location>
        <position position="37"/>
    </location>
    <ligand>
        <name>S-adenosyl-L-methionine</name>
        <dbReference type="ChEBI" id="CHEBI:59789"/>
    </ligand>
</feature>
<feature type="binding site" evidence="1">
    <location>
        <position position="57"/>
    </location>
    <ligand>
        <name>S-adenosyl-L-methionine</name>
        <dbReference type="ChEBI" id="CHEBI:59789"/>
    </ligand>
</feature>
<feature type="binding site" evidence="1">
    <location>
        <position position="85"/>
    </location>
    <ligand>
        <name>S-adenosyl-L-methionine</name>
        <dbReference type="ChEBI" id="CHEBI:59789"/>
    </ligand>
</feature>
<feature type="binding site" evidence="1">
    <location>
        <position position="104"/>
    </location>
    <ligand>
        <name>S-adenosyl-L-methionine</name>
        <dbReference type="ChEBI" id="CHEBI:59789"/>
    </ligand>
</feature>
<dbReference type="EC" id="2.1.1.182" evidence="1"/>
<dbReference type="EMBL" id="CP000776">
    <property type="protein sequence ID" value="ABS52302.1"/>
    <property type="molecule type" value="Genomic_DNA"/>
</dbReference>
<dbReference type="RefSeq" id="WP_012109565.1">
    <property type="nucleotide sequence ID" value="NC_009714.1"/>
</dbReference>
<dbReference type="SMR" id="A7I417"/>
<dbReference type="STRING" id="360107.CHAB381_1746"/>
<dbReference type="KEGG" id="cha:CHAB381_1746"/>
<dbReference type="eggNOG" id="COG0030">
    <property type="taxonomic scope" value="Bacteria"/>
</dbReference>
<dbReference type="HOGENOM" id="CLU_041220_0_2_7"/>
<dbReference type="OrthoDB" id="9814755at2"/>
<dbReference type="Proteomes" id="UP000002407">
    <property type="component" value="Chromosome"/>
</dbReference>
<dbReference type="GO" id="GO:0005829">
    <property type="term" value="C:cytosol"/>
    <property type="evidence" value="ECO:0007669"/>
    <property type="project" value="TreeGrafter"/>
</dbReference>
<dbReference type="GO" id="GO:0052908">
    <property type="term" value="F:16S rRNA (adenine(1518)-N(6)/adenine(1519)-N(6))-dimethyltransferase activity"/>
    <property type="evidence" value="ECO:0007669"/>
    <property type="project" value="UniProtKB-EC"/>
</dbReference>
<dbReference type="GO" id="GO:0003723">
    <property type="term" value="F:RNA binding"/>
    <property type="evidence" value="ECO:0007669"/>
    <property type="project" value="UniProtKB-KW"/>
</dbReference>
<dbReference type="CDD" id="cd02440">
    <property type="entry name" value="AdoMet_MTases"/>
    <property type="match status" value="1"/>
</dbReference>
<dbReference type="Gene3D" id="1.10.8.100">
    <property type="entry name" value="Ribosomal RNA adenine dimethylase-like, domain 2"/>
    <property type="match status" value="1"/>
</dbReference>
<dbReference type="Gene3D" id="3.40.50.150">
    <property type="entry name" value="Vaccinia Virus protein VP39"/>
    <property type="match status" value="1"/>
</dbReference>
<dbReference type="HAMAP" id="MF_00607">
    <property type="entry name" value="16SrRNA_methyltr_A"/>
    <property type="match status" value="1"/>
</dbReference>
<dbReference type="InterPro" id="IPR001737">
    <property type="entry name" value="KsgA/Erm"/>
</dbReference>
<dbReference type="InterPro" id="IPR023165">
    <property type="entry name" value="rRNA_Ade_diMease-like_C"/>
</dbReference>
<dbReference type="InterPro" id="IPR020596">
    <property type="entry name" value="rRNA_Ade_Mease_Trfase_CS"/>
</dbReference>
<dbReference type="InterPro" id="IPR020598">
    <property type="entry name" value="rRNA_Ade_methylase_Trfase_N"/>
</dbReference>
<dbReference type="InterPro" id="IPR011530">
    <property type="entry name" value="rRNA_adenine_dimethylase"/>
</dbReference>
<dbReference type="InterPro" id="IPR029063">
    <property type="entry name" value="SAM-dependent_MTases_sf"/>
</dbReference>
<dbReference type="NCBIfam" id="TIGR00755">
    <property type="entry name" value="ksgA"/>
    <property type="match status" value="1"/>
</dbReference>
<dbReference type="PANTHER" id="PTHR11727">
    <property type="entry name" value="DIMETHYLADENOSINE TRANSFERASE"/>
    <property type="match status" value="1"/>
</dbReference>
<dbReference type="PANTHER" id="PTHR11727:SF7">
    <property type="entry name" value="DIMETHYLADENOSINE TRANSFERASE-RELATED"/>
    <property type="match status" value="1"/>
</dbReference>
<dbReference type="Pfam" id="PF00398">
    <property type="entry name" value="RrnaAD"/>
    <property type="match status" value="1"/>
</dbReference>
<dbReference type="SMART" id="SM00650">
    <property type="entry name" value="rADc"/>
    <property type="match status" value="1"/>
</dbReference>
<dbReference type="SUPFAM" id="SSF53335">
    <property type="entry name" value="S-adenosyl-L-methionine-dependent methyltransferases"/>
    <property type="match status" value="1"/>
</dbReference>
<dbReference type="PROSITE" id="PS01131">
    <property type="entry name" value="RRNA_A_DIMETH"/>
    <property type="match status" value="1"/>
</dbReference>
<dbReference type="PROSITE" id="PS51689">
    <property type="entry name" value="SAM_RNA_A_N6_MT"/>
    <property type="match status" value="1"/>
</dbReference>
<proteinExistence type="inferred from homology"/>
<evidence type="ECO:0000255" key="1">
    <source>
        <dbReference type="HAMAP-Rule" id="MF_00607"/>
    </source>
</evidence>
<organism>
    <name type="scientific">Campylobacter hominis (strain ATCC BAA-381 / DSM 21671 / CCUG 45161 / LMG 19568 / NCTC 13146 / CH001A)</name>
    <dbReference type="NCBI Taxonomy" id="360107"/>
    <lineage>
        <taxon>Bacteria</taxon>
        <taxon>Pseudomonadati</taxon>
        <taxon>Campylobacterota</taxon>
        <taxon>Epsilonproteobacteria</taxon>
        <taxon>Campylobacterales</taxon>
        <taxon>Campylobacteraceae</taxon>
        <taxon>Campylobacter</taxon>
    </lineage>
</organism>
<name>RSMA_CAMHC</name>
<gene>
    <name evidence="1" type="primary">rsmA</name>
    <name evidence="1" type="synonym">ksgA</name>
    <name type="ordered locus">CHAB381_1746</name>
</gene>
<reference key="1">
    <citation type="submission" date="2007-07" db="EMBL/GenBank/DDBJ databases">
        <title>Complete genome sequence of Campylobacter hominis ATCC BAA-381, a commensal isolated from the human gastrointestinal tract.</title>
        <authorList>
            <person name="Fouts D.E."/>
            <person name="Mongodin E.F."/>
            <person name="Puiu D."/>
            <person name="Sebastian Y."/>
            <person name="Miller W.G."/>
            <person name="Mandrell R.E."/>
            <person name="Nelson K.E."/>
        </authorList>
    </citation>
    <scope>NUCLEOTIDE SEQUENCE [LARGE SCALE GENOMIC DNA]</scope>
    <source>
        <strain>ATCC BAA-381 / DSM 21671 / CCUG 45161 / LMG 19568 / NCTC 13146 / CH001A</strain>
    </source>
</reference>
<sequence length="269" mass="31088">MYIAKKKFGQNFLKDKNALNKIIESIPENAENIVEIGAGLGDLTYELLRKFKVKSYEIDKDLIEFLKSKFACELENRKFELVFGDALKFWKNGLCNKNYFLVANLPYYVATNMILKAIDDELCDGFVAMVQKEVAEKFCAESGDSEFGGISVLADIFGKCEFLFSVPADSFEPAPKVVSAVIRLKKTRKIDDIFENSVQYENFKNFLKICFSSPRKTIMKNLSTKFDKEILQSIFEKLDLTTNLRAHELNFTLFFKIFKNLRIRDERNK</sequence>